<organism>
    <name type="scientific">Brucella suis biovar 1 (strain 1330)</name>
    <dbReference type="NCBI Taxonomy" id="204722"/>
    <lineage>
        <taxon>Bacteria</taxon>
        <taxon>Pseudomonadati</taxon>
        <taxon>Pseudomonadota</taxon>
        <taxon>Alphaproteobacteria</taxon>
        <taxon>Hyphomicrobiales</taxon>
        <taxon>Brucellaceae</taxon>
        <taxon>Brucella/Ochrobactrum group</taxon>
        <taxon>Brucella</taxon>
    </lineage>
</organism>
<name>YU58_BRUSU</name>
<sequence length="172" mass="18991">MRTLVMVACAVSLAACSSPPKPPTVSGRHRIPINSPAAQEELRLQVFPQEPTAQATMWPARPPKQTVSVYFPQDVTVFRPTSAQINQLHTLLWPVPKHINVRGLTDNNCPPPGDTQVARVRALAIYNWLINQGVSASRITISYAPVKDYASNAPLSPGRVLNRRVDIEILRK</sequence>
<proteinExistence type="evidence at transcript level"/>
<gene>
    <name type="ordered locus">BRA0058</name>
    <name type="ordered locus">BS1330_II0058</name>
</gene>
<protein>
    <recommendedName>
        <fullName>Type IV secretion system putative outer membrane lipoprotein BRA0058/BS1330_II0058</fullName>
    </recommendedName>
</protein>
<reference key="1">
    <citation type="journal article" date="1999" name="Mol. Microbiol.">
        <title>A homologue of the Agrobacterium tumefaciens VirB and Bordetella pertussis Ptl type IV secretion systems is essential for intracellular survival of Brucella suis.</title>
        <authorList>
            <person name="O'Callaghan D."/>
            <person name="Cazevieille C."/>
            <person name="Allardet-Servent A."/>
            <person name="Boschiroli M.L."/>
            <person name="Bourg G."/>
            <person name="Foulongne V."/>
            <person name="Frutos P."/>
            <person name="Kulakov Y."/>
            <person name="Ramuz M."/>
        </authorList>
    </citation>
    <scope>NUCLEOTIDE SEQUENCE [GENOMIC DNA]</scope>
    <source>
        <strain>1330</strain>
    </source>
</reference>
<reference key="2">
    <citation type="journal article" date="2002" name="Proc. Natl. Acad. Sci. U.S.A.">
        <title>The Brucella suis virB operon is induced intracellularly in macrophages.</title>
        <authorList>
            <person name="Boschiroli M.L."/>
            <person name="Ouahrani-Bettache S."/>
            <person name="Foulongne V."/>
            <person name="Michaux-Charachon S."/>
            <person name="Bourg G."/>
            <person name="Allardet-Servent A."/>
            <person name="Cazevieille C."/>
            <person name="Liautard J.P."/>
            <person name="Ramuz M."/>
            <person name="O'Callaghan D."/>
        </authorList>
    </citation>
    <scope>NUCLEOTIDE SEQUENCE [GENOMIC DNA]</scope>
    <scope>EXPRESSION CONDITIONS</scope>
    <source>
        <strain>1330</strain>
    </source>
</reference>
<reference key="3">
    <citation type="journal article" date="2002" name="Proc. Natl. Acad. Sci. U.S.A.">
        <title>The Brucella suis genome reveals fundamental similarities between animal and plant pathogens and symbionts.</title>
        <authorList>
            <person name="Paulsen I.T."/>
            <person name="Seshadri R."/>
            <person name="Nelson K.E."/>
            <person name="Eisen J.A."/>
            <person name="Heidelberg J.F."/>
            <person name="Read T.D."/>
            <person name="Dodson R.J."/>
            <person name="Umayam L.A."/>
            <person name="Brinkac L.M."/>
            <person name="Beanan M.J."/>
            <person name="Daugherty S.C."/>
            <person name="DeBoy R.T."/>
            <person name="Durkin A.S."/>
            <person name="Kolonay J.F."/>
            <person name="Madupu R."/>
            <person name="Nelson W.C."/>
            <person name="Ayodeji B."/>
            <person name="Kraul M."/>
            <person name="Shetty J."/>
            <person name="Malek J.A."/>
            <person name="Van Aken S.E."/>
            <person name="Riedmuller S."/>
            <person name="Tettelin H."/>
            <person name="Gill S.R."/>
            <person name="White O."/>
            <person name="Salzberg S.L."/>
            <person name="Hoover D.L."/>
            <person name="Lindler L.E."/>
            <person name="Halling S.M."/>
            <person name="Boyle S.M."/>
            <person name="Fraser C.M."/>
        </authorList>
    </citation>
    <scope>NUCLEOTIDE SEQUENCE [LARGE SCALE GENOMIC DNA]</scope>
    <source>
        <strain>1330</strain>
    </source>
</reference>
<reference key="4">
    <citation type="journal article" date="2011" name="J. Bacteriol.">
        <title>Revised genome sequence of Brucella suis 1330.</title>
        <authorList>
            <person name="Tae H."/>
            <person name="Shallom S."/>
            <person name="Settlage R."/>
            <person name="Preston D."/>
            <person name="Adams L.G."/>
            <person name="Garner H.R."/>
        </authorList>
    </citation>
    <scope>NUCLEOTIDE SEQUENCE [LARGE SCALE GENOMIC DNA]</scope>
    <source>
        <strain>1330</strain>
    </source>
</reference>
<evidence type="ECO:0000255" key="1">
    <source>
        <dbReference type="PROSITE-ProRule" id="PRU00303"/>
    </source>
</evidence>
<evidence type="ECO:0000255" key="2">
    <source>
        <dbReference type="PROSITE-ProRule" id="PRU00473"/>
    </source>
</evidence>
<evidence type="ECO:0000305" key="3"/>
<feature type="signal peptide" evidence="1">
    <location>
        <begin position="1"/>
        <end position="15"/>
    </location>
</feature>
<feature type="chain" id="PRO_0000291448" description="Type IV secretion system putative outer membrane lipoprotein BRA0058/BS1330_II0058">
    <location>
        <begin position="16"/>
        <end position="172"/>
    </location>
</feature>
<feature type="domain" description="OmpA-like" evidence="2">
    <location>
        <begin position="58"/>
        <end position="172"/>
    </location>
</feature>
<feature type="lipid moiety-binding region" description="N-palmitoyl cysteine" evidence="1">
    <location>
        <position position="16"/>
    </location>
</feature>
<feature type="lipid moiety-binding region" description="S-diacylglycerol cysteine" evidence="1">
    <location>
        <position position="16"/>
    </location>
</feature>
<keyword id="KW-0998">Cell outer membrane</keyword>
<keyword id="KW-0449">Lipoprotein</keyword>
<keyword id="KW-0472">Membrane</keyword>
<keyword id="KW-0564">Palmitate</keyword>
<keyword id="KW-0732">Signal</keyword>
<keyword id="KW-0843">Virulence</keyword>
<accession>Q9RPX3</accession>
<accession>G0KEQ6</accession>
<accession>Q7CEG5</accession>
<comment type="function">
    <text>The VirB system could be required for the establishment of the replication niche in the host.</text>
</comment>
<comment type="subcellular location">
    <subcellularLocation>
        <location evidence="3">Cell outer membrane</location>
        <topology evidence="1">Lipid-anchor</topology>
    </subcellularLocation>
</comment>
<comment type="induction">
    <text>Specifically induced within macrophages by phagosome acidification. Induced at 37 degrees Celsius in minimal medium, suggesting that nutritional stress is a regulating signal.</text>
</comment>
<comment type="miscellaneous">
    <text>Transcription of the operon is maximal in early exponential phase.</text>
</comment>
<dbReference type="EMBL" id="AF141604">
    <property type="protein sequence ID" value="AAD56622.1"/>
    <property type="molecule type" value="Genomic_DNA"/>
</dbReference>
<dbReference type="EMBL" id="AE014292">
    <property type="protein sequence ID" value="AAN33270.1"/>
    <property type="molecule type" value="Genomic_DNA"/>
</dbReference>
<dbReference type="EMBL" id="CP002998">
    <property type="protein sequence ID" value="AEM19550.1"/>
    <property type="molecule type" value="Genomic_DNA"/>
</dbReference>
<dbReference type="RefSeq" id="WP_004689960.1">
    <property type="nucleotide sequence ID" value="NZ_KN046805.1"/>
</dbReference>
<dbReference type="SMR" id="Q9RPX3"/>
<dbReference type="KEGG" id="bms:BRA0058"/>
<dbReference type="KEGG" id="bsi:BS1330_II0058"/>
<dbReference type="PATRIC" id="fig|204722.21.peg.2313"/>
<dbReference type="HOGENOM" id="CLU_125850_0_0_5"/>
<dbReference type="PhylomeDB" id="Q9RPX3"/>
<dbReference type="Proteomes" id="UP000007104">
    <property type="component" value="Chromosome II"/>
</dbReference>
<dbReference type="GO" id="GO:0009279">
    <property type="term" value="C:cell outer membrane"/>
    <property type="evidence" value="ECO:0007669"/>
    <property type="project" value="UniProtKB-SubCell"/>
</dbReference>
<dbReference type="Gene3D" id="3.30.1330.60">
    <property type="entry name" value="OmpA-like domain"/>
    <property type="match status" value="1"/>
</dbReference>
<dbReference type="InterPro" id="IPR006665">
    <property type="entry name" value="OmpA-like"/>
</dbReference>
<dbReference type="InterPro" id="IPR036737">
    <property type="entry name" value="OmpA-like_sf"/>
</dbReference>
<dbReference type="Pfam" id="PF00691">
    <property type="entry name" value="OmpA"/>
    <property type="match status" value="1"/>
</dbReference>
<dbReference type="SUPFAM" id="SSF103088">
    <property type="entry name" value="OmpA-like"/>
    <property type="match status" value="1"/>
</dbReference>
<dbReference type="PROSITE" id="PS51123">
    <property type="entry name" value="OMPA_2"/>
    <property type="match status" value="1"/>
</dbReference>
<dbReference type="PROSITE" id="PS51257">
    <property type="entry name" value="PROKAR_LIPOPROTEIN"/>
    <property type="match status" value="1"/>
</dbReference>